<sequence>MVAKAVCVINGDAKGTVYFEQEDACAPVKVCGEITGLNKGQHGFHVHEFGDNTNGCMSSGPHFNPLNKEHGAPTDENRHLGDLGNIEAPGDGPTKVCINDSKITLFGENSIVGRTVVVHADPDDLGKGGHELSKSTGNAGARIGCGVIGICKI</sequence>
<name>SODC_CHYAM</name>
<comment type="function">
    <text>Destroys radicals which are normally produced within the cells and which are toxic to biological systems.</text>
</comment>
<comment type="catalytic activity">
    <reaction>
        <text>2 superoxide + 2 H(+) = H2O2 + O2</text>
        <dbReference type="Rhea" id="RHEA:20696"/>
        <dbReference type="ChEBI" id="CHEBI:15378"/>
        <dbReference type="ChEBI" id="CHEBI:15379"/>
        <dbReference type="ChEBI" id="CHEBI:16240"/>
        <dbReference type="ChEBI" id="CHEBI:18421"/>
        <dbReference type="EC" id="1.15.1.1"/>
    </reaction>
</comment>
<comment type="cofactor">
    <cofactor evidence="1">
        <name>Cu cation</name>
        <dbReference type="ChEBI" id="CHEBI:23378"/>
    </cofactor>
    <text evidence="1">Binds 1 copper ion per subunit.</text>
</comment>
<comment type="cofactor">
    <cofactor evidence="1">
        <name>Zn(2+)</name>
        <dbReference type="ChEBI" id="CHEBI:29105"/>
    </cofactor>
    <text evidence="1">Binds 1 zinc ion per subunit.</text>
</comment>
<comment type="subunit">
    <text>Homodimer.</text>
</comment>
<comment type="subcellular location">
    <subcellularLocation>
        <location>Cytoplasm</location>
    </subcellularLocation>
</comment>
<comment type="similarity">
    <text evidence="2">Belongs to the Cu-Zn superoxide dismutase family.</text>
</comment>
<proteinExistence type="inferred from homology"/>
<keyword id="KW-0049">Antioxidant</keyword>
<keyword id="KW-0186">Copper</keyword>
<keyword id="KW-0963">Cytoplasm</keyword>
<keyword id="KW-1015">Disulfide bond</keyword>
<keyword id="KW-0479">Metal-binding</keyword>
<keyword id="KW-0560">Oxidoreductase</keyword>
<keyword id="KW-0862">Zinc</keyword>
<reference key="1">
    <citation type="journal article" date="1992" name="Insect Mol. Biol.">
        <title>Structure and sequence of the Cu,Zn superoxide dismutase gene of Chymomyza amoena: phylogeny of the genus and codon-use evolution.</title>
        <authorList>
            <person name="Kwiatowski J.M."/>
            <person name="Skarecky D."/>
            <person name="Burgos M."/>
            <person name="Ayala F.J."/>
        </authorList>
    </citation>
    <scope>NUCLEOTIDE SEQUENCE [GENOMIC DNA]</scope>
</reference>
<protein>
    <recommendedName>
        <fullName>Superoxide dismutase [Cu-Zn]</fullName>
        <ecNumber>1.15.1.1</ecNumber>
    </recommendedName>
</protein>
<organism>
    <name type="scientific">Chymomyza amoena</name>
    <dbReference type="NCBI Taxonomy" id="7293"/>
    <lineage>
        <taxon>Eukaryota</taxon>
        <taxon>Metazoa</taxon>
        <taxon>Ecdysozoa</taxon>
        <taxon>Arthropoda</taxon>
        <taxon>Hexapoda</taxon>
        <taxon>Insecta</taxon>
        <taxon>Pterygota</taxon>
        <taxon>Neoptera</taxon>
        <taxon>Endopterygota</taxon>
        <taxon>Diptera</taxon>
        <taxon>Brachycera</taxon>
        <taxon>Muscomorpha</taxon>
        <taxon>Ephydroidea</taxon>
        <taxon>Drosophilidae</taxon>
        <taxon>Chymomyza</taxon>
    </lineage>
</organism>
<feature type="initiator methionine" description="Removed" evidence="1">
    <location>
        <position position="1"/>
    </location>
</feature>
<feature type="chain" id="PRO_0000164082" description="Superoxide dismutase [Cu-Zn]">
    <location>
        <begin position="2"/>
        <end position="153"/>
    </location>
</feature>
<feature type="binding site" evidence="1">
    <location>
        <position position="45"/>
    </location>
    <ligand>
        <name>Cu cation</name>
        <dbReference type="ChEBI" id="CHEBI:23378"/>
        <note>catalytic</note>
    </ligand>
</feature>
<feature type="binding site" evidence="1">
    <location>
        <position position="47"/>
    </location>
    <ligand>
        <name>Cu cation</name>
        <dbReference type="ChEBI" id="CHEBI:23378"/>
        <note>catalytic</note>
    </ligand>
</feature>
<feature type="binding site" evidence="1">
    <location>
        <position position="62"/>
    </location>
    <ligand>
        <name>Cu cation</name>
        <dbReference type="ChEBI" id="CHEBI:23378"/>
        <note>catalytic</note>
    </ligand>
</feature>
<feature type="binding site" evidence="1">
    <location>
        <position position="62"/>
    </location>
    <ligand>
        <name>Zn(2+)</name>
        <dbReference type="ChEBI" id="CHEBI:29105"/>
        <note>structural</note>
    </ligand>
</feature>
<feature type="binding site" evidence="1">
    <location>
        <position position="70"/>
    </location>
    <ligand>
        <name>Zn(2+)</name>
        <dbReference type="ChEBI" id="CHEBI:29105"/>
        <note>structural</note>
    </ligand>
</feature>
<feature type="binding site" evidence="1">
    <location>
        <position position="79"/>
    </location>
    <ligand>
        <name>Zn(2+)</name>
        <dbReference type="ChEBI" id="CHEBI:29105"/>
        <note>structural</note>
    </ligand>
</feature>
<feature type="binding site" evidence="1">
    <location>
        <position position="82"/>
    </location>
    <ligand>
        <name>Zn(2+)</name>
        <dbReference type="ChEBI" id="CHEBI:29105"/>
        <note>structural</note>
    </ligand>
</feature>
<feature type="binding site" evidence="1">
    <location>
        <position position="119"/>
    </location>
    <ligand>
        <name>Cu cation</name>
        <dbReference type="ChEBI" id="CHEBI:23378"/>
        <note>catalytic</note>
    </ligand>
</feature>
<feature type="disulfide bond" evidence="1">
    <location>
        <begin position="56"/>
        <end position="145"/>
    </location>
</feature>
<evidence type="ECO:0000250" key="1"/>
<evidence type="ECO:0000305" key="2"/>
<dbReference type="EC" id="1.15.1.1"/>
<dbReference type="EMBL" id="X61687">
    <property type="protein sequence ID" value="CAA43859.1"/>
    <property type="molecule type" value="Genomic_DNA"/>
</dbReference>
<dbReference type="PIR" id="S48117">
    <property type="entry name" value="S48117"/>
</dbReference>
<dbReference type="SMR" id="Q07182"/>
<dbReference type="GO" id="GO:0005737">
    <property type="term" value="C:cytoplasm"/>
    <property type="evidence" value="ECO:0007669"/>
    <property type="project" value="UniProtKB-SubCell"/>
</dbReference>
<dbReference type="GO" id="GO:0005507">
    <property type="term" value="F:copper ion binding"/>
    <property type="evidence" value="ECO:0007669"/>
    <property type="project" value="InterPro"/>
</dbReference>
<dbReference type="GO" id="GO:0004784">
    <property type="term" value="F:superoxide dismutase activity"/>
    <property type="evidence" value="ECO:0007669"/>
    <property type="project" value="UniProtKB-EC"/>
</dbReference>
<dbReference type="CDD" id="cd00305">
    <property type="entry name" value="Cu-Zn_Superoxide_Dismutase"/>
    <property type="match status" value="1"/>
</dbReference>
<dbReference type="FunFam" id="2.60.40.200:FF:000001">
    <property type="entry name" value="Superoxide dismutase [Cu-Zn]"/>
    <property type="match status" value="1"/>
</dbReference>
<dbReference type="Gene3D" id="2.60.40.200">
    <property type="entry name" value="Superoxide dismutase, copper/zinc binding domain"/>
    <property type="match status" value="1"/>
</dbReference>
<dbReference type="InterPro" id="IPR036423">
    <property type="entry name" value="SOD-like_Cu/Zn_dom_sf"/>
</dbReference>
<dbReference type="InterPro" id="IPR024134">
    <property type="entry name" value="SOD_Cu/Zn_/chaperone"/>
</dbReference>
<dbReference type="InterPro" id="IPR018152">
    <property type="entry name" value="SOD_Cu/Zn_BS"/>
</dbReference>
<dbReference type="InterPro" id="IPR001424">
    <property type="entry name" value="SOD_Cu_Zn_dom"/>
</dbReference>
<dbReference type="PANTHER" id="PTHR10003">
    <property type="entry name" value="SUPEROXIDE DISMUTASE CU-ZN -RELATED"/>
    <property type="match status" value="1"/>
</dbReference>
<dbReference type="Pfam" id="PF00080">
    <property type="entry name" value="Sod_Cu"/>
    <property type="match status" value="1"/>
</dbReference>
<dbReference type="PRINTS" id="PR00068">
    <property type="entry name" value="CUZNDISMTASE"/>
</dbReference>
<dbReference type="SUPFAM" id="SSF49329">
    <property type="entry name" value="Cu,Zn superoxide dismutase-like"/>
    <property type="match status" value="1"/>
</dbReference>
<dbReference type="PROSITE" id="PS00087">
    <property type="entry name" value="SOD_CU_ZN_1"/>
    <property type="match status" value="1"/>
</dbReference>
<dbReference type="PROSITE" id="PS00332">
    <property type="entry name" value="SOD_CU_ZN_2"/>
    <property type="match status" value="1"/>
</dbReference>
<accession>Q07182</accession>
<gene>
    <name type="primary">Sod</name>
</gene>